<organism>
    <name type="scientific">Picosynechococcus sp. (strain ATCC 27264 / PCC 7002 / PR-6)</name>
    <name type="common">Agmenellum quadruplicatum</name>
    <dbReference type="NCBI Taxonomy" id="32049"/>
    <lineage>
        <taxon>Bacteria</taxon>
        <taxon>Bacillati</taxon>
        <taxon>Cyanobacteriota</taxon>
        <taxon>Cyanophyceae</taxon>
        <taxon>Oscillatoriophycideae</taxon>
        <taxon>Chroococcales</taxon>
        <taxon>Geminocystaceae</taxon>
        <taxon>Picosynechococcus</taxon>
    </lineage>
</organism>
<proteinExistence type="inferred from homology"/>
<feature type="chain" id="PRO_0000219791" description="Photosystem II reaction center protein L">
    <location>
        <begin position="1"/>
        <end position="39"/>
    </location>
</feature>
<feature type="transmembrane region" description="Helical" evidence="1">
    <location>
        <begin position="18"/>
        <end position="38"/>
    </location>
</feature>
<comment type="function">
    <text evidence="1">One of the components of the core complex of photosystem II (PSII). PSII is a light-driven water:plastoquinone oxidoreductase that uses light energy to abstract electrons from H(2)O, generating O(2) and a proton gradient subsequently used for ATP formation. It consists of a core antenna complex that captures photons, and an electron transfer chain that converts photonic excitation into a charge separation. This subunit is found at the monomer-monomer interface and is required for correct PSII assembly and/or dimerization.</text>
</comment>
<comment type="subunit">
    <text evidence="1">PSII is composed of 1 copy each of membrane proteins PsbA, PsbB, PsbC, PsbD, PsbE, PsbF, PsbH, PsbI, PsbJ, PsbK, PsbL, PsbM, PsbT, PsbX, PsbY, PsbZ, Psb30/Ycf12, peripheral proteins PsbO, CyanoQ (PsbQ), PsbU, PsbV and a large number of cofactors. It forms dimeric complexes.</text>
</comment>
<comment type="subcellular location">
    <subcellularLocation>
        <location evidence="1">Cellular thylakoid membrane</location>
        <topology evidence="1">Single-pass membrane protein</topology>
    </subcellularLocation>
</comment>
<comment type="similarity">
    <text evidence="1">Belongs to the PsbL family.</text>
</comment>
<name>PSBL_PICP2</name>
<reference key="1">
    <citation type="journal article" date="2002" name="J. Biol. Chem.">
        <title>Assembly of photosystem I. I. Inactivation of the rubA gene encoding a membrane-associated rubredoxin in the cyanobacterium Synechococcus sp. PCC 7002 causes a loss of photosystem I activity.</title>
        <authorList>
            <person name="Shen G."/>
            <person name="Zhao J."/>
            <person name="Reimer S.K."/>
            <person name="Antonkine M.L."/>
            <person name="Cai Q."/>
            <person name="Weiland S.M."/>
            <person name="Golbeck J.H."/>
            <person name="Bryant D.A."/>
        </authorList>
    </citation>
    <scope>NUCLEOTIDE SEQUENCE [GENOMIC DNA]</scope>
</reference>
<reference key="2">
    <citation type="submission" date="2008-02" db="EMBL/GenBank/DDBJ databases">
        <title>Complete sequence of Synechococcus sp. PCC 7002.</title>
        <authorList>
            <person name="Li T."/>
            <person name="Zhao J."/>
            <person name="Zhao C."/>
            <person name="Liu Z."/>
            <person name="Zhao F."/>
            <person name="Marquardt J."/>
            <person name="Nomura C.T."/>
            <person name="Persson S."/>
            <person name="Detter J.C."/>
            <person name="Richardson P.M."/>
            <person name="Lanz C."/>
            <person name="Schuster S.C."/>
            <person name="Wang J."/>
            <person name="Li S."/>
            <person name="Huang X."/>
            <person name="Cai T."/>
            <person name="Yu Z."/>
            <person name="Luo J."/>
            <person name="Zhao J."/>
            <person name="Bryant D.A."/>
        </authorList>
    </citation>
    <scope>NUCLEOTIDE SEQUENCE [LARGE SCALE GENOMIC DNA]</scope>
    <source>
        <strain>ATCC 27264 / PCC 7002 / PR-6</strain>
    </source>
</reference>
<protein>
    <recommendedName>
        <fullName evidence="1">Photosystem II reaction center protein L</fullName>
        <shortName evidence="1">PSII-L</shortName>
    </recommendedName>
</protein>
<dbReference type="EMBL" id="AY075046">
    <property type="protein sequence ID" value="AAL78086.1"/>
    <property type="molecule type" value="Genomic_DNA"/>
</dbReference>
<dbReference type="EMBL" id="CP000951">
    <property type="protein sequence ID" value="ACA98244.1"/>
    <property type="molecule type" value="Genomic_DNA"/>
</dbReference>
<dbReference type="RefSeq" id="WP_012305868.1">
    <property type="nucleotide sequence ID" value="NZ_JAHHPU010000004.1"/>
</dbReference>
<dbReference type="SMR" id="Q8RSW1"/>
<dbReference type="STRING" id="32049.SYNPCC7002_A0232"/>
<dbReference type="KEGG" id="syp:SYNPCC7002_A0232"/>
<dbReference type="eggNOG" id="ENOG5033AKP">
    <property type="taxonomic scope" value="Bacteria"/>
</dbReference>
<dbReference type="HOGENOM" id="CLU_214425_0_0_3"/>
<dbReference type="Proteomes" id="UP000001688">
    <property type="component" value="Chromosome"/>
</dbReference>
<dbReference type="GO" id="GO:0009539">
    <property type="term" value="C:photosystem II reaction center"/>
    <property type="evidence" value="ECO:0007669"/>
    <property type="project" value="InterPro"/>
</dbReference>
<dbReference type="GO" id="GO:0031676">
    <property type="term" value="C:plasma membrane-derived thylakoid membrane"/>
    <property type="evidence" value="ECO:0007669"/>
    <property type="project" value="UniProtKB-SubCell"/>
</dbReference>
<dbReference type="GO" id="GO:0015979">
    <property type="term" value="P:photosynthesis"/>
    <property type="evidence" value="ECO:0007669"/>
    <property type="project" value="UniProtKB-UniRule"/>
</dbReference>
<dbReference type="HAMAP" id="MF_01317">
    <property type="entry name" value="PSII_PsbL"/>
    <property type="match status" value="1"/>
</dbReference>
<dbReference type="InterPro" id="IPR003372">
    <property type="entry name" value="PSII_PsbL"/>
</dbReference>
<dbReference type="InterPro" id="IPR037266">
    <property type="entry name" value="PSII_PsbL_sf"/>
</dbReference>
<dbReference type="NCBIfam" id="NF001972">
    <property type="entry name" value="PRK00753.1"/>
    <property type="match status" value="1"/>
</dbReference>
<dbReference type="Pfam" id="PF02419">
    <property type="entry name" value="PsbL"/>
    <property type="match status" value="1"/>
</dbReference>
<dbReference type="SUPFAM" id="SSF161017">
    <property type="entry name" value="Photosystem II reaction center protein L, PsbL"/>
    <property type="match status" value="1"/>
</dbReference>
<evidence type="ECO:0000255" key="1">
    <source>
        <dbReference type="HAMAP-Rule" id="MF_01317"/>
    </source>
</evidence>
<gene>
    <name evidence="1" type="primary">psbL</name>
    <name type="ordered locus">SYNPCC7002_A0232</name>
</gene>
<accession>Q8RSW1</accession>
<accession>B1XMQ7</accession>
<keyword id="KW-0472">Membrane</keyword>
<keyword id="KW-0602">Photosynthesis</keyword>
<keyword id="KW-0604">Photosystem II</keyword>
<keyword id="KW-0674">Reaction center</keyword>
<keyword id="KW-1185">Reference proteome</keyword>
<keyword id="KW-0793">Thylakoid</keyword>
<keyword id="KW-0812">Transmembrane</keyword>
<keyword id="KW-1133">Transmembrane helix</keyword>
<sequence>MERNQNPNRQPVELNRTSLYLGLLLIAVLGILFSSYFFN</sequence>